<protein>
    <recommendedName>
        <fullName>V-type proton ATPase subunit C 1</fullName>
        <shortName>V-ATPase subunit C 1</shortName>
    </recommendedName>
    <alternativeName>
        <fullName>Vacuolar proton pump subunit C 1</fullName>
    </alternativeName>
</protein>
<sequence length="382" mass="43901">MTEFWLISAPGEKTCQQTWEKLHAATTKNNNLAVSSKFNIPDLKVGTLDVLVGLSDELAKLDAFVEGVVKKVAQYMADVLEDSKDKVQENLLASGVDLVTYITRFQWDMAKYPIKQSLKNISEIIAKGVTQIDNDLKSRASAYNNLKGNLQNLERKNAGSLLTRSLAEIVKKDDFVLDSEYLVTLLVVVPKLNHNDWIKQYETLAEMVVPRSSNVLSEDQDSYLCNVTLFKKAVDDFRHKARENKFIVRDFQYNEEEMRADKEEMNRLSTDKKKQFGPLVRWLKVNFSEAFIAWIHIKALRVFVESVLRYGLPVNFQAMLLQPNKKSVKKLREVLHELYKHLDSSAAAIIDAPMDIPGLNLSQQEYYPYVYYKIDCNLLEFK</sequence>
<organism>
    <name type="scientific">Rattus norvegicus</name>
    <name type="common">Rat</name>
    <dbReference type="NCBI Taxonomy" id="10116"/>
    <lineage>
        <taxon>Eukaryota</taxon>
        <taxon>Metazoa</taxon>
        <taxon>Chordata</taxon>
        <taxon>Craniata</taxon>
        <taxon>Vertebrata</taxon>
        <taxon>Euteleostomi</taxon>
        <taxon>Mammalia</taxon>
        <taxon>Eutheria</taxon>
        <taxon>Euarchontoglires</taxon>
        <taxon>Glires</taxon>
        <taxon>Rodentia</taxon>
        <taxon>Myomorpha</taxon>
        <taxon>Muroidea</taxon>
        <taxon>Muridae</taxon>
        <taxon>Murinae</taxon>
        <taxon>Rattus</taxon>
    </lineage>
</organism>
<name>VATC1_RAT</name>
<feature type="initiator methionine" description="Removed" evidence="1">
    <location>
        <position position="1"/>
    </location>
</feature>
<feature type="chain" id="PRO_0000307374" description="V-type proton ATPase subunit C 1">
    <location>
        <begin position="2"/>
        <end position="382"/>
    </location>
</feature>
<feature type="modified residue" description="N-acetylthreonine" evidence="1">
    <location>
        <position position="2"/>
    </location>
</feature>
<dbReference type="EMBL" id="BC089961">
    <property type="protein sequence ID" value="AAH89961.1"/>
    <property type="molecule type" value="mRNA"/>
</dbReference>
<dbReference type="RefSeq" id="NP_001011992.1">
    <property type="nucleotide sequence ID" value="NM_001011992.1"/>
</dbReference>
<dbReference type="PDB" id="6VQ6">
    <property type="method" value="EM"/>
    <property type="resolution" value="3.90 A"/>
    <property type="chains" value="G=1-382"/>
</dbReference>
<dbReference type="PDB" id="6VQ7">
    <property type="method" value="EM"/>
    <property type="resolution" value="4.00 A"/>
    <property type="chains" value="G=1-382"/>
</dbReference>
<dbReference type="PDB" id="6VQ8">
    <property type="method" value="EM"/>
    <property type="resolution" value="3.90 A"/>
    <property type="chains" value="G=1-382"/>
</dbReference>
<dbReference type="PDB" id="6VQI">
    <property type="method" value="EM"/>
    <property type="resolution" value="4.30 A"/>
    <property type="chains" value="G=1-382"/>
</dbReference>
<dbReference type="PDB" id="6VQJ">
    <property type="method" value="EM"/>
    <property type="resolution" value="5.70 A"/>
    <property type="chains" value="G=1-382"/>
</dbReference>
<dbReference type="PDB" id="6VQK">
    <property type="method" value="EM"/>
    <property type="resolution" value="5.70 A"/>
    <property type="chains" value="G=1-382"/>
</dbReference>
<dbReference type="PDB" id="7UZF">
    <property type="method" value="EM"/>
    <property type="resolution" value="3.80 A"/>
    <property type="chains" value="G=1-382"/>
</dbReference>
<dbReference type="PDB" id="7UZG">
    <property type="method" value="EM"/>
    <property type="resolution" value="3.70 A"/>
    <property type="chains" value="G=1-382"/>
</dbReference>
<dbReference type="PDB" id="7UZH">
    <property type="method" value="EM"/>
    <property type="resolution" value="3.80 A"/>
    <property type="chains" value="G=1-382"/>
</dbReference>
<dbReference type="PDB" id="7UZI">
    <property type="method" value="EM"/>
    <property type="resolution" value="3.90 A"/>
    <property type="chains" value="G=1-382"/>
</dbReference>
<dbReference type="PDB" id="7UZJ">
    <property type="method" value="EM"/>
    <property type="resolution" value="3.30 A"/>
    <property type="chains" value="G=1-382"/>
</dbReference>
<dbReference type="PDB" id="7UZK">
    <property type="method" value="EM"/>
    <property type="resolution" value="3.00 A"/>
    <property type="chains" value="G=1-382"/>
</dbReference>
<dbReference type="PDB" id="9B8Q">
    <property type="method" value="EM"/>
    <property type="resolution" value="3.80 A"/>
    <property type="chains" value="G=1-382"/>
</dbReference>
<dbReference type="PDB" id="9BRB">
    <property type="method" value="EM"/>
    <property type="resolution" value="3.60 A"/>
    <property type="chains" value="G=1-382"/>
</dbReference>
<dbReference type="PDB" id="9BRC">
    <property type="method" value="EM"/>
    <property type="resolution" value="3.90 A"/>
    <property type="chains" value="G=1-382"/>
</dbReference>
<dbReference type="PDB" id="9BRD">
    <property type="method" value="EM"/>
    <property type="resolution" value="3.50 A"/>
    <property type="chains" value="G=1-382"/>
</dbReference>
<dbReference type="PDBsum" id="6VQ6"/>
<dbReference type="PDBsum" id="6VQ7"/>
<dbReference type="PDBsum" id="6VQ8"/>
<dbReference type="PDBsum" id="6VQI"/>
<dbReference type="PDBsum" id="6VQJ"/>
<dbReference type="PDBsum" id="6VQK"/>
<dbReference type="PDBsum" id="7UZF"/>
<dbReference type="PDBsum" id="7UZG"/>
<dbReference type="PDBsum" id="7UZH"/>
<dbReference type="PDBsum" id="7UZI"/>
<dbReference type="PDBsum" id="7UZJ"/>
<dbReference type="PDBsum" id="7UZK"/>
<dbReference type="PDBsum" id="9B8Q"/>
<dbReference type="PDBsum" id="9BRB"/>
<dbReference type="PDBsum" id="9BRC"/>
<dbReference type="PDBsum" id="9BRD"/>
<dbReference type="EMDB" id="EMD-21351"/>
<dbReference type="EMDB" id="EMD-21352"/>
<dbReference type="EMDB" id="EMD-21353"/>
<dbReference type="EMDB" id="EMD-26909"/>
<dbReference type="EMDB" id="EMD-26910"/>
<dbReference type="EMDB" id="EMD-26911"/>
<dbReference type="EMDB" id="EMD-26912"/>
<dbReference type="EMDB" id="EMD-26913"/>
<dbReference type="EMDB" id="EMD-26914"/>
<dbReference type="EMDB" id="EMD-44352"/>
<dbReference type="SMR" id="Q5FVI6"/>
<dbReference type="BioGRID" id="256396">
    <property type="interactions" value="1"/>
</dbReference>
<dbReference type="CORUM" id="Q5FVI6"/>
<dbReference type="FunCoup" id="Q5FVI6">
    <property type="interactions" value="3115"/>
</dbReference>
<dbReference type="IntAct" id="Q5FVI6">
    <property type="interactions" value="2"/>
</dbReference>
<dbReference type="STRING" id="10116.ENSRNOP00000006917"/>
<dbReference type="iPTMnet" id="Q5FVI6"/>
<dbReference type="PhosphoSitePlus" id="Q5FVI6"/>
<dbReference type="SwissPalm" id="Q5FVI6"/>
<dbReference type="jPOST" id="Q5FVI6"/>
<dbReference type="PaxDb" id="10116-ENSRNOP00000006917"/>
<dbReference type="Ensembl" id="ENSRNOT00000006917.6">
    <property type="protein sequence ID" value="ENSRNOP00000006917.4"/>
    <property type="gene ID" value="ENSRNOG00000004846.6"/>
</dbReference>
<dbReference type="GeneID" id="299971"/>
<dbReference type="KEGG" id="rno:299971"/>
<dbReference type="UCSC" id="RGD:1311082">
    <property type="organism name" value="rat"/>
</dbReference>
<dbReference type="AGR" id="RGD:1311082"/>
<dbReference type="CTD" id="528"/>
<dbReference type="RGD" id="1311082">
    <property type="gene designation" value="Atp6v1c1"/>
</dbReference>
<dbReference type="eggNOG" id="KOG2909">
    <property type="taxonomic scope" value="Eukaryota"/>
</dbReference>
<dbReference type="GeneTree" id="ENSGT00390000004263"/>
<dbReference type="HOGENOM" id="CLU_017554_3_0_1"/>
<dbReference type="InParanoid" id="Q5FVI6"/>
<dbReference type="OMA" id="VMIWIHV"/>
<dbReference type="OrthoDB" id="6605928at2759"/>
<dbReference type="PhylomeDB" id="Q5FVI6"/>
<dbReference type="TreeFam" id="TF314912"/>
<dbReference type="Reactome" id="R-RNO-1222556">
    <property type="pathway name" value="ROS and RNS production in phagocytes"/>
</dbReference>
<dbReference type="Reactome" id="R-RNO-77387">
    <property type="pathway name" value="Insulin receptor recycling"/>
</dbReference>
<dbReference type="Reactome" id="R-RNO-917977">
    <property type="pathway name" value="Transferrin endocytosis and recycling"/>
</dbReference>
<dbReference type="Reactome" id="R-RNO-9639288">
    <property type="pathway name" value="Amino acids regulate mTORC1"/>
</dbReference>
<dbReference type="Reactome" id="R-RNO-983712">
    <property type="pathway name" value="Ion channel transport"/>
</dbReference>
<dbReference type="PRO" id="PR:Q5FVI6"/>
<dbReference type="Proteomes" id="UP000002494">
    <property type="component" value="Chromosome 7"/>
</dbReference>
<dbReference type="Bgee" id="ENSRNOG00000004846">
    <property type="expression patterns" value="Expressed in cerebellum and 19 other cell types or tissues"/>
</dbReference>
<dbReference type="GO" id="GO:0045177">
    <property type="term" value="C:apical part of cell"/>
    <property type="evidence" value="ECO:0000314"/>
    <property type="project" value="RGD"/>
</dbReference>
<dbReference type="GO" id="GO:1904949">
    <property type="term" value="C:ATPase complex"/>
    <property type="evidence" value="ECO:0000266"/>
    <property type="project" value="RGD"/>
</dbReference>
<dbReference type="GO" id="GO:0030665">
    <property type="term" value="C:clathrin-coated vesicle membrane"/>
    <property type="evidence" value="ECO:0007669"/>
    <property type="project" value="UniProtKB-SubCell"/>
</dbReference>
<dbReference type="GO" id="GO:0098850">
    <property type="term" value="C:extrinsic component of synaptic vesicle membrane"/>
    <property type="evidence" value="ECO:0000314"/>
    <property type="project" value="SynGO"/>
</dbReference>
<dbReference type="GO" id="GO:0005886">
    <property type="term" value="C:plasma membrane"/>
    <property type="evidence" value="ECO:0000250"/>
    <property type="project" value="UniProtKB"/>
</dbReference>
<dbReference type="GO" id="GO:0033176">
    <property type="term" value="C:proton-transporting V-type ATPase complex"/>
    <property type="evidence" value="ECO:0000266"/>
    <property type="project" value="RGD"/>
</dbReference>
<dbReference type="GO" id="GO:0033180">
    <property type="term" value="C:proton-transporting V-type ATPase, V1 domain"/>
    <property type="evidence" value="ECO:0000266"/>
    <property type="project" value="RGD"/>
</dbReference>
<dbReference type="GO" id="GO:0000221">
    <property type="term" value="C:vacuolar proton-transporting V-type ATPase, V1 domain"/>
    <property type="evidence" value="ECO:0000250"/>
    <property type="project" value="UniProtKB"/>
</dbReference>
<dbReference type="GO" id="GO:0046961">
    <property type="term" value="F:proton-transporting ATPase activity, rotational mechanism"/>
    <property type="evidence" value="ECO:0000266"/>
    <property type="project" value="RGD"/>
</dbReference>
<dbReference type="GO" id="GO:0097401">
    <property type="term" value="P:synaptic vesicle lumen acidification"/>
    <property type="evidence" value="ECO:0000266"/>
    <property type="project" value="RGD"/>
</dbReference>
<dbReference type="CDD" id="cd14785">
    <property type="entry name" value="V-ATPase_C"/>
    <property type="match status" value="1"/>
</dbReference>
<dbReference type="FunFam" id="1.20.1460.10:FF:000004">
    <property type="entry name" value="V-type proton ATPase subunit C"/>
    <property type="match status" value="1"/>
</dbReference>
<dbReference type="FunFam" id="3.30.70.100:FF:000002">
    <property type="entry name" value="V-type proton ATPase subunit C"/>
    <property type="match status" value="1"/>
</dbReference>
<dbReference type="FunFam" id="3.30.70.1180:FF:000003">
    <property type="entry name" value="V-type proton ATPase subunit C"/>
    <property type="match status" value="1"/>
</dbReference>
<dbReference type="Gene3D" id="3.30.70.100">
    <property type="match status" value="1"/>
</dbReference>
<dbReference type="Gene3D" id="1.20.1460.10">
    <property type="entry name" value="subunit c (vma5p) of the yeast v-atpase, domain 2"/>
    <property type="match status" value="1"/>
</dbReference>
<dbReference type="Gene3D" id="3.30.70.1180">
    <property type="entry name" value="Vacuolar atp synthase subunit c, domain 1"/>
    <property type="match status" value="1"/>
</dbReference>
<dbReference type="InterPro" id="IPR004907">
    <property type="entry name" value="ATPase_V1-cplx_csu"/>
</dbReference>
<dbReference type="InterPro" id="IPR036132">
    <property type="entry name" value="Vac_ATP_synth_c_sf"/>
</dbReference>
<dbReference type="PANTHER" id="PTHR10137">
    <property type="entry name" value="V-TYPE PROTON ATPASE SUBUNIT C"/>
    <property type="match status" value="1"/>
</dbReference>
<dbReference type="PANTHER" id="PTHR10137:SF5">
    <property type="entry name" value="V-TYPE PROTON ATPASE SUBUNIT C 1"/>
    <property type="match status" value="1"/>
</dbReference>
<dbReference type="Pfam" id="PF03223">
    <property type="entry name" value="V-ATPase_C"/>
    <property type="match status" value="1"/>
</dbReference>
<dbReference type="SUPFAM" id="SSF118203">
    <property type="entry name" value="Vacuolar ATP synthase subunit C"/>
    <property type="match status" value="1"/>
</dbReference>
<keyword id="KW-0002">3D-structure</keyword>
<keyword id="KW-0007">Acetylation</keyword>
<keyword id="KW-0968">Cytoplasmic vesicle</keyword>
<keyword id="KW-0375">Hydrogen ion transport</keyword>
<keyword id="KW-0406">Ion transport</keyword>
<keyword id="KW-0472">Membrane</keyword>
<keyword id="KW-1185">Reference proteome</keyword>
<keyword id="KW-0770">Synapse</keyword>
<keyword id="KW-0813">Transport</keyword>
<evidence type="ECO:0000250" key="1">
    <source>
        <dbReference type="UniProtKB" id="P21283"/>
    </source>
</evidence>
<evidence type="ECO:0000250" key="2">
    <source>
        <dbReference type="UniProtKB" id="P31412"/>
    </source>
</evidence>
<evidence type="ECO:0000269" key="3">
    <source>
    </source>
</evidence>
<evidence type="ECO:0000305" key="4"/>
<evidence type="ECO:0007744" key="5">
    <source>
        <dbReference type="PDB" id="6VQ6"/>
    </source>
</evidence>
<evidence type="ECO:0007744" key="6">
    <source>
        <dbReference type="PDB" id="6VQ7"/>
    </source>
</evidence>
<evidence type="ECO:0007744" key="7">
    <source>
        <dbReference type="PDB" id="6VQ8"/>
    </source>
</evidence>
<evidence type="ECO:0007744" key="8">
    <source>
        <dbReference type="PDB" id="6VQI"/>
    </source>
</evidence>
<evidence type="ECO:0007744" key="9">
    <source>
        <dbReference type="PDB" id="6VQJ"/>
    </source>
</evidence>
<evidence type="ECO:0007744" key="10">
    <source>
        <dbReference type="PDB" id="6VQK"/>
    </source>
</evidence>
<comment type="function">
    <text evidence="2 3">Subunit of the V1 complex of vacuolar(H+)-ATPase (V-ATPase), a multisubunit enzyme composed of a peripheral complex (V1) that hydrolyzes ATP and a membrane integral complex (V0) that translocates protons (PubMed:32165585). V-ATPase is responsible for acidifying and maintaining the pH of intracellular compartments and in some cell types, is targeted to the plasma membrane, where it is responsible for acidifying the extracellular environment (PubMed:32165585). Subunit C is necessary for the assembly of the catalytic sector of the enzyme and is likely to have a specific function in its catalytic activity (By similarity).</text>
</comment>
<comment type="subunit">
    <text evidence="3">V-ATPase is a heteromultimeric enzyme made up of two complexes: the ATP-hydrolytic V1 complex and the proton translocation V0 complex (PubMed:32165585). The V1 complex consists of three catalytic AB heterodimers that form a heterohexamer, three peripheral stalks each consisting of EG heterodimers, one central rotor including subunits D and F, and the regulatory subunits C and H (PubMed:32165585). The proton translocation complex V0 consists of the proton transport subunit a, a ring of proteolipid subunits c9c'', rotary subunit d, subunits e and f, and the accessory subunits ATP6AP1/Ac45 and ATP6AP2/PRR (PubMed:32165585).</text>
</comment>
<comment type="subcellular location">
    <subcellularLocation>
        <location evidence="3">Cytoplasmic vesicle</location>
        <location evidence="3">Secretory vesicle</location>
        <location evidence="3">Synaptic vesicle membrane</location>
        <topology evidence="4">Peripheral membrane protein</topology>
    </subcellularLocation>
    <subcellularLocation>
        <location evidence="3">Cytoplasmic vesicle</location>
        <location evidence="3">Clathrin-coated vesicle membrane</location>
        <topology evidence="4">Peripheral membrane protein</topology>
    </subcellularLocation>
</comment>
<comment type="tissue specificity">
    <text evidence="3">Expressed in brain (at protein level).</text>
</comment>
<comment type="similarity">
    <text evidence="4">Belongs to the V-ATPase C subunit family.</text>
</comment>
<accession>Q5FVI6</accession>
<reference key="1">
    <citation type="journal article" date="2004" name="Genome Res.">
        <title>The status, quality, and expansion of the NIH full-length cDNA project: the Mammalian Gene Collection (MGC).</title>
        <authorList>
            <consortium name="The MGC Project Team"/>
        </authorList>
    </citation>
    <scope>NUCLEOTIDE SEQUENCE [LARGE SCALE MRNA]</scope>
    <source>
        <tissue>Brain</tissue>
    </source>
</reference>
<reference evidence="5 6 7 8 9 10" key="2">
    <citation type="journal article" date="2020" name="Science">
        <title>Structure of V-ATPase from the mammalian brain.</title>
        <authorList>
            <person name="Abbas Y.M."/>
            <person name="Wu D."/>
            <person name="Bueler S.A."/>
            <person name="Robinson C.V."/>
            <person name="Rubinstein J.L."/>
        </authorList>
    </citation>
    <scope>STRUCTURE BY ELECTRON MICROSCOPY (3.90 ANGSTROMS)</scope>
    <scope>FUNCTION</scope>
    <scope>IDENTIFICATION IN THE V-ATPASE COMPLEX</scope>
    <scope>SUBCELLULAR LOCATION</scope>
    <scope>IDENTIFICATION BY MASS SPECTROMETRY</scope>
    <scope>TISSUE SPECIFICITY</scope>
</reference>
<proteinExistence type="evidence at protein level"/>
<gene>
    <name type="primary">Atp6v1c1</name>
</gene>